<keyword id="KW-0002">3D-structure</keyword>
<keyword id="KW-0175">Coiled coil</keyword>
<keyword id="KW-0963">Cytoplasm</keyword>
<keyword id="KW-0206">Cytoskeleton</keyword>
<keyword id="KW-0225">Disease variant</keyword>
<keyword id="KW-0991">Intellectual disability</keyword>
<keyword id="KW-1267">Proteomics identification</keyword>
<keyword id="KW-1185">Reference proteome</keyword>
<keyword id="KW-0964">Secreted</keyword>
<dbReference type="EMBL" id="AK291356">
    <property type="protein sequence ID" value="BAF84045.1"/>
    <property type="molecule type" value="mRNA"/>
</dbReference>
<dbReference type="EMBL" id="AC098484">
    <property type="status" value="NOT_ANNOTATED_CDS"/>
    <property type="molecule type" value="Genomic_DNA"/>
</dbReference>
<dbReference type="EMBL" id="AL512353">
    <property type="status" value="NOT_ANNOTATED_CDS"/>
    <property type="molecule type" value="Genomic_DNA"/>
</dbReference>
<dbReference type="EMBL" id="CH471059">
    <property type="protein sequence ID" value="EAX07134.1"/>
    <property type="molecule type" value="Genomic_DNA"/>
</dbReference>
<dbReference type="EMBL" id="CH471059">
    <property type="protein sequence ID" value="EAX07135.1"/>
    <property type="molecule type" value="Genomic_DNA"/>
</dbReference>
<dbReference type="EMBL" id="BC029427">
    <property type="protein sequence ID" value="AAH29427.1"/>
    <property type="molecule type" value="mRNA"/>
</dbReference>
<dbReference type="CCDS" id="CCDS474.1"/>
<dbReference type="RefSeq" id="NP_955374.1">
    <property type="nucleotide sequence ID" value="NM_199342.4"/>
</dbReference>
<dbReference type="RefSeq" id="XP_016856715.1">
    <property type="nucleotide sequence ID" value="XM_017001226.2"/>
</dbReference>
<dbReference type="RefSeq" id="XP_054192421.1">
    <property type="nucleotide sequence ID" value="XM_054336446.1"/>
</dbReference>
<dbReference type="PDB" id="6J4O">
    <property type="method" value="X-ray"/>
    <property type="resolution" value="2.30 A"/>
    <property type="chains" value="B=1-66"/>
</dbReference>
<dbReference type="PDB" id="6J4P">
    <property type="method" value="X-ray"/>
    <property type="resolution" value="1.60 A"/>
    <property type="chains" value="B=1-66"/>
</dbReference>
<dbReference type="PDB" id="6J4Q">
    <property type="method" value="X-ray"/>
    <property type="resolution" value="2.70 A"/>
    <property type="chains" value="B/D/G/K=1-66"/>
</dbReference>
<dbReference type="PDB" id="6J4S">
    <property type="method" value="X-ray"/>
    <property type="resolution" value="2.80 A"/>
    <property type="chains" value="B=1-66"/>
</dbReference>
<dbReference type="PDB" id="6J4U">
    <property type="method" value="X-ray"/>
    <property type="resolution" value="2.00 A"/>
    <property type="chains" value="B=1-66"/>
</dbReference>
<dbReference type="PDB" id="6J4V">
    <property type="method" value="X-ray"/>
    <property type="resolution" value="2.10 A"/>
    <property type="chains" value="B=1-66"/>
</dbReference>
<dbReference type="PDB" id="6J7B">
    <property type="method" value="X-ray"/>
    <property type="resolution" value="1.62 A"/>
    <property type="chains" value="B=1-52"/>
</dbReference>
<dbReference type="PDB" id="6J8F">
    <property type="method" value="X-ray"/>
    <property type="resolution" value="2.28 A"/>
    <property type="chains" value="A=3-48"/>
</dbReference>
<dbReference type="PDB" id="6J8N">
    <property type="method" value="X-ray"/>
    <property type="resolution" value="1.95 A"/>
    <property type="chains" value="A/C=1-66"/>
</dbReference>
<dbReference type="PDB" id="6J8O">
    <property type="method" value="X-ray"/>
    <property type="resolution" value="1.85 A"/>
    <property type="chains" value="A=3-49"/>
</dbReference>
<dbReference type="PDB" id="6J91">
    <property type="method" value="X-ray"/>
    <property type="resolution" value="3.50 A"/>
    <property type="chains" value="A=1-66"/>
</dbReference>
<dbReference type="PDB" id="6J9H">
    <property type="method" value="X-ray"/>
    <property type="resolution" value="2.31 A"/>
    <property type="chains" value="A/C=1-66"/>
</dbReference>
<dbReference type="PDB" id="6JZC">
    <property type="method" value="X-ray"/>
    <property type="resolution" value="2.20 A"/>
    <property type="chains" value="C/D=1-66"/>
</dbReference>
<dbReference type="PDB" id="6JZD">
    <property type="method" value="X-ray"/>
    <property type="resolution" value="2.48 A"/>
    <property type="chains" value="B=1-66"/>
</dbReference>
<dbReference type="PDB" id="6JZE">
    <property type="method" value="X-ray"/>
    <property type="resolution" value="2.51 A"/>
    <property type="chains" value="B=1-66"/>
</dbReference>
<dbReference type="PDB" id="6K81">
    <property type="method" value="X-ray"/>
    <property type="resolution" value="2.28 A"/>
    <property type="chains" value="B=1-66"/>
</dbReference>
<dbReference type="PDB" id="6LPG">
    <property type="method" value="X-ray"/>
    <property type="resolution" value="2.30 A"/>
    <property type="chains" value="B=2-66"/>
</dbReference>
<dbReference type="PDB" id="6NVQ">
    <property type="method" value="X-ray"/>
    <property type="resolution" value="2.10 A"/>
    <property type="chains" value="B=1-66"/>
</dbReference>
<dbReference type="PDB" id="6OCF">
    <property type="method" value="X-ray"/>
    <property type="resolution" value="2.10 A"/>
    <property type="chains" value="B=18-66"/>
</dbReference>
<dbReference type="PDB" id="6OCG">
    <property type="method" value="X-ray"/>
    <property type="resolution" value="1.83 A"/>
    <property type="chains" value="B=26-51"/>
</dbReference>
<dbReference type="PDB" id="6OCH">
    <property type="method" value="X-ray"/>
    <property type="resolution" value="2.00 A"/>
    <property type="chains" value="B/D=25-52"/>
</dbReference>
<dbReference type="PDB" id="6QBY">
    <property type="method" value="X-ray"/>
    <property type="resolution" value="2.09 A"/>
    <property type="chains" value="B/D=1-66"/>
</dbReference>
<dbReference type="PDB" id="6WSL">
    <property type="method" value="EM"/>
    <property type="resolution" value="3.10 A"/>
    <property type="chains" value="D/H=1-66"/>
</dbReference>
<dbReference type="PDB" id="7ZCW">
    <property type="method" value="EM"/>
    <property type="resolution" value="3.60 A"/>
    <property type="chains" value="D=1-66"/>
</dbReference>
<dbReference type="PDBsum" id="6J4O"/>
<dbReference type="PDBsum" id="6J4P"/>
<dbReference type="PDBsum" id="6J4Q"/>
<dbReference type="PDBsum" id="6J4S"/>
<dbReference type="PDBsum" id="6J4U"/>
<dbReference type="PDBsum" id="6J4V"/>
<dbReference type="PDBsum" id="6J7B"/>
<dbReference type="PDBsum" id="6J8F"/>
<dbReference type="PDBsum" id="6J8N"/>
<dbReference type="PDBsum" id="6J8O"/>
<dbReference type="PDBsum" id="6J91"/>
<dbReference type="PDBsum" id="6J9H"/>
<dbReference type="PDBsum" id="6JZC"/>
<dbReference type="PDBsum" id="6JZD"/>
<dbReference type="PDBsum" id="6JZE"/>
<dbReference type="PDBsum" id="6K81"/>
<dbReference type="PDBsum" id="6LPG"/>
<dbReference type="PDBsum" id="6NVQ"/>
<dbReference type="PDBsum" id="6OCF"/>
<dbReference type="PDBsum" id="6OCG"/>
<dbReference type="PDBsum" id="6OCH"/>
<dbReference type="PDBsum" id="6QBY"/>
<dbReference type="PDBsum" id="6WSL"/>
<dbReference type="PDBsum" id="7ZCW"/>
<dbReference type="EMDB" id="EMD-14634"/>
<dbReference type="EMDB" id="EMD-21893"/>
<dbReference type="SMR" id="Q8N300"/>
<dbReference type="BioGRID" id="131942">
    <property type="interactions" value="3"/>
</dbReference>
<dbReference type="FunCoup" id="Q8N300">
    <property type="interactions" value="23"/>
</dbReference>
<dbReference type="IntAct" id="Q8N300">
    <property type="interactions" value="1"/>
</dbReference>
<dbReference type="STRING" id="9606.ENSP00000361599"/>
<dbReference type="iPTMnet" id="Q8N300"/>
<dbReference type="MetOSite" id="Q8N300"/>
<dbReference type="PhosphoSitePlus" id="Q8N300"/>
<dbReference type="BioMuta" id="SVBP"/>
<dbReference type="jPOST" id="Q8N300"/>
<dbReference type="MassIVE" id="Q8N300"/>
<dbReference type="PaxDb" id="9606-ENSP00000361599"/>
<dbReference type="PeptideAtlas" id="Q8N300"/>
<dbReference type="ProteomicsDB" id="71745"/>
<dbReference type="Pumba" id="Q8N300"/>
<dbReference type="Antibodypedia" id="2034">
    <property type="antibodies" value="54 antibodies from 12 providers"/>
</dbReference>
<dbReference type="DNASU" id="374969"/>
<dbReference type="Ensembl" id="ENST00000372521.9">
    <property type="protein sequence ID" value="ENSP00000361599.4"/>
    <property type="gene ID" value="ENSG00000177868.12"/>
</dbReference>
<dbReference type="Ensembl" id="ENST00000372522.5">
    <property type="protein sequence ID" value="ENSP00000361600.1"/>
    <property type="gene ID" value="ENSG00000177868.12"/>
</dbReference>
<dbReference type="GeneID" id="374969"/>
<dbReference type="KEGG" id="hsa:374969"/>
<dbReference type="MANE-Select" id="ENST00000372521.9">
    <property type="protein sequence ID" value="ENSP00000361599.4"/>
    <property type="RefSeq nucleotide sequence ID" value="NM_199342.4"/>
    <property type="RefSeq protein sequence ID" value="NP_955374.1"/>
</dbReference>
<dbReference type="UCSC" id="uc001cib.3">
    <property type="organism name" value="human"/>
</dbReference>
<dbReference type="AGR" id="HGNC:29204"/>
<dbReference type="CTD" id="374969"/>
<dbReference type="DisGeNET" id="374969"/>
<dbReference type="GeneCards" id="SVBP"/>
<dbReference type="HGNC" id="HGNC:29204">
    <property type="gene designation" value="SVBP"/>
</dbReference>
<dbReference type="HPA" id="ENSG00000177868">
    <property type="expression patterns" value="Low tissue specificity"/>
</dbReference>
<dbReference type="MalaCards" id="SVBP"/>
<dbReference type="MIM" id="617853">
    <property type="type" value="gene"/>
</dbReference>
<dbReference type="MIM" id="618569">
    <property type="type" value="phenotype"/>
</dbReference>
<dbReference type="neXtProt" id="NX_Q8N300"/>
<dbReference type="OpenTargets" id="ENSG00000177868"/>
<dbReference type="Orphanet" id="528084">
    <property type="disease" value="Non-specific syndromic intellectual disability"/>
</dbReference>
<dbReference type="PharmGKB" id="PA142672181"/>
<dbReference type="VEuPathDB" id="HostDB:ENSG00000177868"/>
<dbReference type="eggNOG" id="ENOG502S99I">
    <property type="taxonomic scope" value="Eukaryota"/>
</dbReference>
<dbReference type="GeneTree" id="ENSGT00390000006113"/>
<dbReference type="HOGENOM" id="CLU_2830589_0_0_1"/>
<dbReference type="InParanoid" id="Q8N300"/>
<dbReference type="OMA" id="AMDPPAR"/>
<dbReference type="OrthoDB" id="10035051at2759"/>
<dbReference type="PAN-GO" id="Q8N300">
    <property type="GO annotations" value="3 GO annotations based on evolutionary models"/>
</dbReference>
<dbReference type="PhylomeDB" id="Q8N300"/>
<dbReference type="TreeFam" id="TF344015"/>
<dbReference type="PathwayCommons" id="Q8N300"/>
<dbReference type="Reactome" id="R-HSA-8955332">
    <property type="pathway name" value="Carboxyterminal post-translational modifications of tubulin"/>
</dbReference>
<dbReference type="SignaLink" id="Q8N300"/>
<dbReference type="BioGRID-ORCS" id="374969">
    <property type="hits" value="151 hits in 1130 CRISPR screens"/>
</dbReference>
<dbReference type="ChiTaRS" id="SVBP">
    <property type="organism name" value="human"/>
</dbReference>
<dbReference type="GenomeRNAi" id="374969"/>
<dbReference type="Pharos" id="Q8N300">
    <property type="development level" value="Tbio"/>
</dbReference>
<dbReference type="PRO" id="PR:Q8N300"/>
<dbReference type="Proteomes" id="UP000005640">
    <property type="component" value="Chromosome 1"/>
</dbReference>
<dbReference type="RNAct" id="Q8N300">
    <property type="molecule type" value="protein"/>
</dbReference>
<dbReference type="Bgee" id="ENSG00000177868">
    <property type="expression patterns" value="Expressed in cortical plate and 187 other cell types or tissues"/>
</dbReference>
<dbReference type="GO" id="GO:0045177">
    <property type="term" value="C:apical part of cell"/>
    <property type="evidence" value="ECO:0000314"/>
    <property type="project" value="MGI"/>
</dbReference>
<dbReference type="GO" id="GO:0005737">
    <property type="term" value="C:cytoplasm"/>
    <property type="evidence" value="ECO:0007669"/>
    <property type="project" value="UniProtKB-SubCell"/>
</dbReference>
<dbReference type="GO" id="GO:0005856">
    <property type="term" value="C:cytoskeleton"/>
    <property type="evidence" value="ECO:0007669"/>
    <property type="project" value="UniProtKB-SubCell"/>
</dbReference>
<dbReference type="GO" id="GO:0005576">
    <property type="term" value="C:extracellular region"/>
    <property type="evidence" value="ECO:0007669"/>
    <property type="project" value="UniProtKB-SubCell"/>
</dbReference>
<dbReference type="GO" id="GO:0008017">
    <property type="term" value="F:microtubule binding"/>
    <property type="evidence" value="ECO:0000314"/>
    <property type="project" value="UniProtKB"/>
</dbReference>
<dbReference type="GO" id="GO:0016504">
    <property type="term" value="F:peptidase activator activity"/>
    <property type="evidence" value="ECO:0000314"/>
    <property type="project" value="UniProtKB"/>
</dbReference>
<dbReference type="GO" id="GO:0061564">
    <property type="term" value="P:axon development"/>
    <property type="evidence" value="ECO:0000315"/>
    <property type="project" value="UniProtKB"/>
</dbReference>
<dbReference type="GO" id="GO:0010596">
    <property type="term" value="P:negative regulation of endothelial cell migration"/>
    <property type="evidence" value="ECO:0000316"/>
    <property type="project" value="MGI"/>
</dbReference>
<dbReference type="GO" id="GO:0031397">
    <property type="term" value="P:negative regulation of protein ubiquitination"/>
    <property type="evidence" value="ECO:0000314"/>
    <property type="project" value="MGI"/>
</dbReference>
<dbReference type="GO" id="GO:0009306">
    <property type="term" value="P:protein secretion"/>
    <property type="evidence" value="ECO:0000314"/>
    <property type="project" value="MGI"/>
</dbReference>
<dbReference type="GO" id="GO:0006508">
    <property type="term" value="P:proteolysis"/>
    <property type="evidence" value="ECO:0000314"/>
    <property type="project" value="UniProtKB"/>
</dbReference>
<dbReference type="GO" id="GO:1905048">
    <property type="term" value="P:regulation of metallopeptidase activity"/>
    <property type="evidence" value="ECO:0000315"/>
    <property type="project" value="UniProtKB"/>
</dbReference>
<dbReference type="InterPro" id="IPR031378">
    <property type="entry name" value="SVBP"/>
</dbReference>
<dbReference type="PANTHER" id="PTHR34762">
    <property type="entry name" value="SMALL VASOHIBIN-BINDING PROTEIN"/>
    <property type="match status" value="1"/>
</dbReference>
<dbReference type="PANTHER" id="PTHR34762:SF1">
    <property type="entry name" value="SMALL VASOHIBIN-BINDING PROTEIN"/>
    <property type="match status" value="1"/>
</dbReference>
<dbReference type="Pfam" id="PF15674">
    <property type="entry name" value="CCDC23"/>
    <property type="match status" value="1"/>
</dbReference>
<gene>
    <name evidence="14 16" type="primary">SVBP</name>
    <name evidence="16" type="synonym">CCDC23</name>
</gene>
<proteinExistence type="evidence at protein level"/>
<protein>
    <recommendedName>
        <fullName evidence="14">Small vasohibin-binding protein</fullName>
    </recommendedName>
    <alternativeName>
        <fullName evidence="16">Coiled coil domain-containing protein 23</fullName>
    </alternativeName>
</protein>
<organism>
    <name type="scientific">Homo sapiens</name>
    <name type="common">Human</name>
    <dbReference type="NCBI Taxonomy" id="9606"/>
    <lineage>
        <taxon>Eukaryota</taxon>
        <taxon>Metazoa</taxon>
        <taxon>Chordata</taxon>
        <taxon>Craniata</taxon>
        <taxon>Vertebrata</taxon>
        <taxon>Euteleostomi</taxon>
        <taxon>Mammalia</taxon>
        <taxon>Eutheria</taxon>
        <taxon>Euarchontoglires</taxon>
        <taxon>Primates</taxon>
        <taxon>Haplorrhini</taxon>
        <taxon>Catarrhini</taxon>
        <taxon>Hominidae</taxon>
        <taxon>Homo</taxon>
    </lineage>
</organism>
<sequence>MDPPARKEKTKVKESVSRVEKAKQKSAQQELKQRQRAEIYALNRVMTELEQQQFDEFCKQMQPPGE</sequence>
<comment type="function">
    <text evidence="4 5 6 7 8 9 10 11 12">Enhances the tyrosine carboxypeptidase activity of VASH1 and VASH2, thereby promoting the removal of the C-terminal tyrosine residue of alpha-tubulin (PubMed:29146869, PubMed:31171830, PubMed:31235910, PubMed:31235911, PubMed:31270470, PubMed:31324789). This activity is critical for spindle function and accurate chromosome segregation during mitosis since microtubule detyronisation regulates mitotic spindle length and postioning (PubMed:31171830). Also required to enhance the solubility and secretion of VASH1 and VASH2 (PubMed:20736312, PubMed:27879017, PubMed:30607023). Plays a role in axon and excitatory synapse formation (PubMed:31235911).</text>
</comment>
<comment type="subunit">
    <text evidence="4 5 6 8 9 10 11 12">Interacts with VASH1 and VASH2.</text>
</comment>
<comment type="interaction">
    <interactant intactId="EBI-21497577">
        <id>Q8N300</id>
    </interactant>
    <interactant intactId="EBI-21497569">
        <id>Q7L8A9-1</id>
        <label>VASH1</label>
    </interactant>
    <organismsDiffer>false</organismsDiffer>
    <experiments>2</experiments>
</comment>
<comment type="subcellular location">
    <subcellularLocation>
        <location evidence="1">Cytoplasm</location>
    </subcellularLocation>
    <subcellularLocation>
        <location evidence="1">Secreted</location>
    </subcellularLocation>
    <subcellularLocation>
        <location evidence="10">Cytoplasm</location>
        <location evidence="10">Cytoskeleton</location>
    </subcellularLocation>
    <text evidence="1">Detected both intracellularly and extracellularly (By similarity). Within cells, localizes mainly to the apical part of the cell (By similarity).</text>
</comment>
<comment type="disease" evidence="7 13">
    <disease id="DI-05655">
        <name>Neurodevelopmental disorder with ataxia, hypotonia, and microcephaly</name>
        <acronym>NEDAHM</acronym>
        <description>An autosomal recessive neurodevelopmental disorder characterized by intellectual disability, microcephaly, ataxia, and muscular hypotonia.</description>
        <dbReference type="MIM" id="618569"/>
    </disease>
    <text>The disease is caused by variants affecting the gene represented in this entry.</text>
</comment>
<comment type="similarity">
    <text evidence="15">Belongs to the SVBP family.</text>
</comment>
<name>SVBP_HUMAN</name>
<reference key="1">
    <citation type="journal article" date="2004" name="Nat. Genet.">
        <title>Complete sequencing and characterization of 21,243 full-length human cDNAs.</title>
        <authorList>
            <person name="Ota T."/>
            <person name="Suzuki Y."/>
            <person name="Nishikawa T."/>
            <person name="Otsuki T."/>
            <person name="Sugiyama T."/>
            <person name="Irie R."/>
            <person name="Wakamatsu A."/>
            <person name="Hayashi K."/>
            <person name="Sato H."/>
            <person name="Nagai K."/>
            <person name="Kimura K."/>
            <person name="Makita H."/>
            <person name="Sekine M."/>
            <person name="Obayashi M."/>
            <person name="Nishi T."/>
            <person name="Shibahara T."/>
            <person name="Tanaka T."/>
            <person name="Ishii S."/>
            <person name="Yamamoto J."/>
            <person name="Saito K."/>
            <person name="Kawai Y."/>
            <person name="Isono Y."/>
            <person name="Nakamura Y."/>
            <person name="Nagahari K."/>
            <person name="Murakami K."/>
            <person name="Yasuda T."/>
            <person name="Iwayanagi T."/>
            <person name="Wagatsuma M."/>
            <person name="Shiratori A."/>
            <person name="Sudo H."/>
            <person name="Hosoiri T."/>
            <person name="Kaku Y."/>
            <person name="Kodaira H."/>
            <person name="Kondo H."/>
            <person name="Sugawara M."/>
            <person name="Takahashi M."/>
            <person name="Kanda K."/>
            <person name="Yokoi T."/>
            <person name="Furuya T."/>
            <person name="Kikkawa E."/>
            <person name="Omura Y."/>
            <person name="Abe K."/>
            <person name="Kamihara K."/>
            <person name="Katsuta N."/>
            <person name="Sato K."/>
            <person name="Tanikawa M."/>
            <person name="Yamazaki M."/>
            <person name="Ninomiya K."/>
            <person name="Ishibashi T."/>
            <person name="Yamashita H."/>
            <person name="Murakawa K."/>
            <person name="Fujimori K."/>
            <person name="Tanai H."/>
            <person name="Kimata M."/>
            <person name="Watanabe M."/>
            <person name="Hiraoka S."/>
            <person name="Chiba Y."/>
            <person name="Ishida S."/>
            <person name="Ono Y."/>
            <person name="Takiguchi S."/>
            <person name="Watanabe S."/>
            <person name="Yosida M."/>
            <person name="Hotuta T."/>
            <person name="Kusano J."/>
            <person name="Kanehori K."/>
            <person name="Takahashi-Fujii A."/>
            <person name="Hara H."/>
            <person name="Tanase T.-O."/>
            <person name="Nomura Y."/>
            <person name="Togiya S."/>
            <person name="Komai F."/>
            <person name="Hara R."/>
            <person name="Takeuchi K."/>
            <person name="Arita M."/>
            <person name="Imose N."/>
            <person name="Musashino K."/>
            <person name="Yuuki H."/>
            <person name="Oshima A."/>
            <person name="Sasaki N."/>
            <person name="Aotsuka S."/>
            <person name="Yoshikawa Y."/>
            <person name="Matsunawa H."/>
            <person name="Ichihara T."/>
            <person name="Shiohata N."/>
            <person name="Sano S."/>
            <person name="Moriya S."/>
            <person name="Momiyama H."/>
            <person name="Satoh N."/>
            <person name="Takami S."/>
            <person name="Terashima Y."/>
            <person name="Suzuki O."/>
            <person name="Nakagawa S."/>
            <person name="Senoh A."/>
            <person name="Mizoguchi H."/>
            <person name="Goto Y."/>
            <person name="Shimizu F."/>
            <person name="Wakebe H."/>
            <person name="Hishigaki H."/>
            <person name="Watanabe T."/>
            <person name="Sugiyama A."/>
            <person name="Takemoto M."/>
            <person name="Kawakami B."/>
            <person name="Yamazaki M."/>
            <person name="Watanabe K."/>
            <person name="Kumagai A."/>
            <person name="Itakura S."/>
            <person name="Fukuzumi Y."/>
            <person name="Fujimori Y."/>
            <person name="Komiyama M."/>
            <person name="Tashiro H."/>
            <person name="Tanigami A."/>
            <person name="Fujiwara T."/>
            <person name="Ono T."/>
            <person name="Yamada K."/>
            <person name="Fujii Y."/>
            <person name="Ozaki K."/>
            <person name="Hirao M."/>
            <person name="Ohmori Y."/>
            <person name="Kawabata A."/>
            <person name="Hikiji T."/>
            <person name="Kobatake N."/>
            <person name="Inagaki H."/>
            <person name="Ikema Y."/>
            <person name="Okamoto S."/>
            <person name="Okitani R."/>
            <person name="Kawakami T."/>
            <person name="Noguchi S."/>
            <person name="Itoh T."/>
            <person name="Shigeta K."/>
            <person name="Senba T."/>
            <person name="Matsumura K."/>
            <person name="Nakajima Y."/>
            <person name="Mizuno T."/>
            <person name="Morinaga M."/>
            <person name="Sasaki M."/>
            <person name="Togashi T."/>
            <person name="Oyama M."/>
            <person name="Hata H."/>
            <person name="Watanabe M."/>
            <person name="Komatsu T."/>
            <person name="Mizushima-Sugano J."/>
            <person name="Satoh T."/>
            <person name="Shirai Y."/>
            <person name="Takahashi Y."/>
            <person name="Nakagawa K."/>
            <person name="Okumura K."/>
            <person name="Nagase T."/>
            <person name="Nomura N."/>
            <person name="Kikuchi H."/>
            <person name="Masuho Y."/>
            <person name="Yamashita R."/>
            <person name="Nakai K."/>
            <person name="Yada T."/>
            <person name="Nakamura Y."/>
            <person name="Ohara O."/>
            <person name="Isogai T."/>
            <person name="Sugano S."/>
        </authorList>
    </citation>
    <scope>NUCLEOTIDE SEQUENCE [LARGE SCALE GENOMIC DNA]</scope>
    <source>
        <tissue>Brain</tissue>
    </source>
</reference>
<reference key="2">
    <citation type="journal article" date="2006" name="Nature">
        <title>The DNA sequence and biological annotation of human chromosome 1.</title>
        <authorList>
            <person name="Gregory S.G."/>
            <person name="Barlow K.F."/>
            <person name="McLay K.E."/>
            <person name="Kaul R."/>
            <person name="Swarbreck D."/>
            <person name="Dunham A."/>
            <person name="Scott C.E."/>
            <person name="Howe K.L."/>
            <person name="Woodfine K."/>
            <person name="Spencer C.C.A."/>
            <person name="Jones M.C."/>
            <person name="Gillson C."/>
            <person name="Searle S."/>
            <person name="Zhou Y."/>
            <person name="Kokocinski F."/>
            <person name="McDonald L."/>
            <person name="Evans R."/>
            <person name="Phillips K."/>
            <person name="Atkinson A."/>
            <person name="Cooper R."/>
            <person name="Jones C."/>
            <person name="Hall R.E."/>
            <person name="Andrews T.D."/>
            <person name="Lloyd C."/>
            <person name="Ainscough R."/>
            <person name="Almeida J.P."/>
            <person name="Ambrose K.D."/>
            <person name="Anderson F."/>
            <person name="Andrew R.W."/>
            <person name="Ashwell R.I.S."/>
            <person name="Aubin K."/>
            <person name="Babbage A.K."/>
            <person name="Bagguley C.L."/>
            <person name="Bailey J."/>
            <person name="Beasley H."/>
            <person name="Bethel G."/>
            <person name="Bird C.P."/>
            <person name="Bray-Allen S."/>
            <person name="Brown J.Y."/>
            <person name="Brown A.J."/>
            <person name="Buckley D."/>
            <person name="Burton J."/>
            <person name="Bye J."/>
            <person name="Carder C."/>
            <person name="Chapman J.C."/>
            <person name="Clark S.Y."/>
            <person name="Clarke G."/>
            <person name="Clee C."/>
            <person name="Cobley V."/>
            <person name="Collier R.E."/>
            <person name="Corby N."/>
            <person name="Coville G.J."/>
            <person name="Davies J."/>
            <person name="Deadman R."/>
            <person name="Dunn M."/>
            <person name="Earthrowl M."/>
            <person name="Ellington A.G."/>
            <person name="Errington H."/>
            <person name="Frankish A."/>
            <person name="Frankland J."/>
            <person name="French L."/>
            <person name="Garner P."/>
            <person name="Garnett J."/>
            <person name="Gay L."/>
            <person name="Ghori M.R.J."/>
            <person name="Gibson R."/>
            <person name="Gilby L.M."/>
            <person name="Gillett W."/>
            <person name="Glithero R.J."/>
            <person name="Grafham D.V."/>
            <person name="Griffiths C."/>
            <person name="Griffiths-Jones S."/>
            <person name="Grocock R."/>
            <person name="Hammond S."/>
            <person name="Harrison E.S.I."/>
            <person name="Hart E."/>
            <person name="Haugen E."/>
            <person name="Heath P.D."/>
            <person name="Holmes S."/>
            <person name="Holt K."/>
            <person name="Howden P.J."/>
            <person name="Hunt A.R."/>
            <person name="Hunt S.E."/>
            <person name="Hunter G."/>
            <person name="Isherwood J."/>
            <person name="James R."/>
            <person name="Johnson C."/>
            <person name="Johnson D."/>
            <person name="Joy A."/>
            <person name="Kay M."/>
            <person name="Kershaw J.K."/>
            <person name="Kibukawa M."/>
            <person name="Kimberley A.M."/>
            <person name="King A."/>
            <person name="Knights A.J."/>
            <person name="Lad H."/>
            <person name="Laird G."/>
            <person name="Lawlor S."/>
            <person name="Leongamornlert D.A."/>
            <person name="Lloyd D.M."/>
            <person name="Loveland J."/>
            <person name="Lovell J."/>
            <person name="Lush M.J."/>
            <person name="Lyne R."/>
            <person name="Martin S."/>
            <person name="Mashreghi-Mohammadi M."/>
            <person name="Matthews L."/>
            <person name="Matthews N.S.W."/>
            <person name="McLaren S."/>
            <person name="Milne S."/>
            <person name="Mistry S."/>
            <person name="Moore M.J.F."/>
            <person name="Nickerson T."/>
            <person name="O'Dell C.N."/>
            <person name="Oliver K."/>
            <person name="Palmeiri A."/>
            <person name="Palmer S.A."/>
            <person name="Parker A."/>
            <person name="Patel D."/>
            <person name="Pearce A.V."/>
            <person name="Peck A.I."/>
            <person name="Pelan S."/>
            <person name="Phelps K."/>
            <person name="Phillimore B.J."/>
            <person name="Plumb R."/>
            <person name="Rajan J."/>
            <person name="Raymond C."/>
            <person name="Rouse G."/>
            <person name="Saenphimmachak C."/>
            <person name="Sehra H.K."/>
            <person name="Sheridan E."/>
            <person name="Shownkeen R."/>
            <person name="Sims S."/>
            <person name="Skuce C.D."/>
            <person name="Smith M."/>
            <person name="Steward C."/>
            <person name="Subramanian S."/>
            <person name="Sycamore N."/>
            <person name="Tracey A."/>
            <person name="Tromans A."/>
            <person name="Van Helmond Z."/>
            <person name="Wall M."/>
            <person name="Wallis J.M."/>
            <person name="White S."/>
            <person name="Whitehead S.L."/>
            <person name="Wilkinson J.E."/>
            <person name="Willey D.L."/>
            <person name="Williams H."/>
            <person name="Wilming L."/>
            <person name="Wray P.W."/>
            <person name="Wu Z."/>
            <person name="Coulson A."/>
            <person name="Vaudin M."/>
            <person name="Sulston J.E."/>
            <person name="Durbin R.M."/>
            <person name="Hubbard T."/>
            <person name="Wooster R."/>
            <person name="Dunham I."/>
            <person name="Carter N.P."/>
            <person name="McVean G."/>
            <person name="Ross M.T."/>
            <person name="Harrow J."/>
            <person name="Olson M.V."/>
            <person name="Beck S."/>
            <person name="Rogers J."/>
            <person name="Bentley D.R."/>
        </authorList>
    </citation>
    <scope>NUCLEOTIDE SEQUENCE [LARGE SCALE GENOMIC DNA]</scope>
</reference>
<reference key="3">
    <citation type="submission" date="2005-09" db="EMBL/GenBank/DDBJ databases">
        <authorList>
            <person name="Mural R.J."/>
            <person name="Istrail S."/>
            <person name="Sutton G.G."/>
            <person name="Florea L."/>
            <person name="Halpern A.L."/>
            <person name="Mobarry C.M."/>
            <person name="Lippert R."/>
            <person name="Walenz B."/>
            <person name="Shatkay H."/>
            <person name="Dew I."/>
            <person name="Miller J.R."/>
            <person name="Flanigan M.J."/>
            <person name="Edwards N.J."/>
            <person name="Bolanos R."/>
            <person name="Fasulo D."/>
            <person name="Halldorsson B.V."/>
            <person name="Hannenhalli S."/>
            <person name="Turner R."/>
            <person name="Yooseph S."/>
            <person name="Lu F."/>
            <person name="Nusskern D.R."/>
            <person name="Shue B.C."/>
            <person name="Zheng X.H."/>
            <person name="Zhong F."/>
            <person name="Delcher A.L."/>
            <person name="Huson D.H."/>
            <person name="Kravitz S.A."/>
            <person name="Mouchard L."/>
            <person name="Reinert K."/>
            <person name="Remington K.A."/>
            <person name="Clark A.G."/>
            <person name="Waterman M.S."/>
            <person name="Eichler E.E."/>
            <person name="Adams M.D."/>
            <person name="Hunkapiller M.W."/>
            <person name="Myers E.W."/>
            <person name="Venter J.C."/>
        </authorList>
    </citation>
    <scope>NUCLEOTIDE SEQUENCE [LARGE SCALE GENOMIC DNA]</scope>
</reference>
<reference key="4">
    <citation type="journal article" date="2004" name="Genome Res.">
        <title>The status, quality, and expansion of the NIH full-length cDNA project: the Mammalian Gene Collection (MGC).</title>
        <authorList>
            <consortium name="The MGC Project Team"/>
        </authorList>
    </citation>
    <scope>NUCLEOTIDE SEQUENCE [LARGE SCALE MRNA]</scope>
    <source>
        <tissue>Lung</tissue>
    </source>
</reference>
<reference key="5">
    <citation type="journal article" date="2010" name="J. Cell Sci.">
        <title>Isolation of a small vasohibin-binding protein (SVBP) and its role in vasohibin secretion.</title>
        <authorList>
            <person name="Suzuki Y."/>
            <person name="Kobayashi M."/>
            <person name="Miyashita H."/>
            <person name="Ohta H."/>
            <person name="Sonoda H."/>
            <person name="Sato Y."/>
        </authorList>
    </citation>
    <scope>FUNCTION</scope>
    <scope>INTERACTION WITH VASH1 AND VASH2</scope>
</reference>
<reference key="6">
    <citation type="journal article" date="2017" name="Protein Sci.">
        <title>Domain architecture of vasohibins required for their chaperone-dependent unconventional extracellular release.</title>
        <authorList>
            <person name="Kadonosono T."/>
            <person name="Yimchuen W."/>
            <person name="Tsubaki T."/>
            <person name="Shiozawa T."/>
            <person name="Suzuki Y."/>
            <person name="Kuchimaru T."/>
            <person name="Sato Y."/>
            <person name="Kizaka-Kondoh S."/>
        </authorList>
    </citation>
    <scope>FUNCTION</scope>
    <scope>INTERACTION WITH VASH1</scope>
</reference>
<reference key="7">
    <citation type="journal article" date="2017" name="Science">
        <title>Vasohibins encode tubulin detyrosinating activity.</title>
        <authorList>
            <person name="Nieuwenhuis J."/>
            <person name="Adamopoulos A."/>
            <person name="Bleijerveld O.B."/>
            <person name="Mazouzi A."/>
            <person name="Stickel E."/>
            <person name="Celie P."/>
            <person name="Altelaar M."/>
            <person name="Knipscheer P."/>
            <person name="Perrakis A."/>
            <person name="Blomen V.A."/>
            <person name="Brummelkamp T.R."/>
        </authorList>
    </citation>
    <scope>FUNCTION</scope>
    <scope>INTERACTION WITH VASH1 AND VASH2</scope>
</reference>
<reference evidence="17 18 19 20 21" key="8">
    <citation type="journal article" date="2019" name="Cell Res.">
        <title>Molecular basis of vasohibins-mediated detyrosination and its impact on spindle function and mitosis.</title>
        <authorList>
            <person name="Liao S."/>
            <person name="Rajendraprasad G."/>
            <person name="Wang N."/>
            <person name="Eibes S."/>
            <person name="Gao J."/>
            <person name="Yu H."/>
            <person name="Wu G."/>
            <person name="Tu X."/>
            <person name="Huang H."/>
            <person name="Barisic M."/>
            <person name="Xu C."/>
        </authorList>
    </citation>
    <scope>X-RAY CRYSTALLOGRAPHY (1.62 ANGSTROMS) OF 20-50 IN COMPLEX WITH VASH1</scope>
    <scope>INTERACTION WITH VASH1</scope>
    <scope>MUTAGENESIS OF 35-GLN-ARG-36; 39-ILE-TYR-40; 42-LEU-ASN-43 AND 45-VAL-MET-46</scope>
    <scope>FUNCTION</scope>
</reference>
<reference evidence="22 23 24" key="9">
    <citation type="journal article" date="2019" name="Nat. Commun.">
        <title>Structural basis of tubulin detyrosination by VASH2/SVBP heterodimer.</title>
        <authorList>
            <person name="Zhou C."/>
            <person name="Yan L."/>
            <person name="Zhang W.H."/>
            <person name="Liu Z."/>
        </authorList>
    </citation>
    <scope>X-RAY CRYSTALLOGRAPHY (2.20 ANGSTROMS) OF 26-60 IN COMPLEX WITH VASH2</scope>
    <scope>INTERACTION WITH VASH2</scope>
    <scope>FUNCTION</scope>
</reference>
<reference evidence="25" key="10">
    <citation type="journal article" date="2019" name="Nat. Struct. Mol. Biol.">
        <title>Crystal structure of the tubulin tyrosine carboxypeptidase complex VASH1-SVBP.</title>
        <authorList>
            <person name="Adamopoulos A."/>
            <person name="Landskron L."/>
            <person name="Heidebrecht T."/>
            <person name="Tsakou F."/>
            <person name="Bleijerveld O.B."/>
            <person name="Altelaar M."/>
            <person name="Nieuwenhuis J."/>
            <person name="Celie P.H.N."/>
            <person name="Brummelkamp T.R."/>
            <person name="Perrakis A."/>
        </authorList>
    </citation>
    <scope>X-RAY CRYSTALLOGRAPHY (2.10 ANGSTROMS) OF 23-56 IN COMPLEX WITH VASH1</scope>
    <scope>INTERACTION WITH VASH1</scope>
    <scope>FUNCTION</scope>
    <scope>MUTAGENESIS OF LYS-32; ARG-34; GLN-35; ARG-36; TYR-40; ASN-43 AND THR-47</scope>
</reference>
<reference evidence="29" key="11">
    <citation type="journal article" date="2019" name="Nat. Struct. Mol. Biol.">
        <title>Structural basis of tubulin detyrosination by the vasohibin-SVBP enzyme complex.</title>
        <authorList>
            <person name="Wang N."/>
            <person name="Bosc C."/>
            <person name="Ryul Choi S."/>
            <person name="Boulan B."/>
            <person name="Peris L."/>
            <person name="Olieric N."/>
            <person name="Bao H."/>
            <person name="Krichen F."/>
            <person name="Chen L."/>
            <person name="Andrieux A."/>
            <person name="Olieric V."/>
            <person name="Moutin M.J."/>
            <person name="Steinmetz M.O."/>
            <person name="Huang H."/>
        </authorList>
    </citation>
    <scope>X-RAY CRYSTALLOGRAPHY (2.09 ANGSTROMS) OF 26-58 IN COMPLEX WITH VASH2 AND TUBULIN PEPTIDE</scope>
    <scope>INTERACTION WITH VASH2</scope>
    <scope>FUNCTION</scope>
    <scope>MUTAGENESIS OF 35-GLN-ARG-36; 39-ILE-TYR-40; 42-LEU-ASN-43; 45-VAL-MET-46 AND 50-GLU--PHE-54</scope>
    <scope>SUBCELLULAR LOCATION</scope>
</reference>
<reference evidence="26 27 28" key="12">
    <citation type="journal article" date="2019" name="Nat. Struct. Mol. Biol.">
        <title>Structural basis of tubulin detyrosination by vasohibins.</title>
        <authorList>
            <person name="Li F."/>
            <person name="Hu Y."/>
            <person name="Qi S."/>
            <person name="Luo X."/>
            <person name="Yu H."/>
        </authorList>
    </citation>
    <scope>X-RAY CRYSTALLOGRAPHY (1.83 ANGSTROMS) OF 18-66 IN COMPLEX WITH VASH1</scope>
    <scope>INTERACTION WITH VASH1</scope>
    <scope>FUNCTION</scope>
    <scope>MUTAGENESIS OF 39-ILE--LEU-42; ILE-39 AND LEU-42</scope>
</reference>
<reference key="13">
    <citation type="journal article" date="2019" name="Genet. Med.">
        <title>Loss of function of SVBP leads to autosomal recessive intellectual disability, microcephaly, ataxia, and hypotonia.</title>
        <authorList>
            <person name="Iqbal Z."/>
            <person name="Tawamie H."/>
            <person name="Ba W."/>
            <person name="Reis A."/>
            <person name="Halak B.A."/>
            <person name="Sticht H."/>
            <person name="Uebe S."/>
            <person name="Kasri N.N."/>
            <person name="Riazuddin S."/>
            <person name="van Bokhoven H."/>
            <person name="Abou Jamra R."/>
        </authorList>
    </citation>
    <scope>INVOLVEMENT IN NEDAHM</scope>
    <scope>FUNCTION</scope>
    <scope>VARIANT NEDAHM 28-GLN--GLU-66 DEL</scope>
    <scope>CHARACTERIZATION OF VARIANT NEDAHM 28-GLN--GLU-66 DEL</scope>
</reference>
<reference key="14">
    <citation type="journal article" date="2019" name="Hum. Mol. Genet.">
        <title>Defective tubulin detyrosination causes structural brain abnormalities with cognitive deficiency in humans and mice.</title>
        <authorList>
            <consortium name="WGS500 Consortium"/>
            <consortium name="Genomics England Research Consortium"/>
            <person name="Pagnamenta A.T."/>
            <person name="Heemeryck P."/>
            <person name="Martin H.C."/>
            <person name="Bosc C."/>
            <person name="Peris L."/>
            <person name="Uszynski I."/>
            <person name="Gory-Faure S."/>
            <person name="Couly S."/>
            <person name="Deshpande C."/>
            <person name="Siddiqui A."/>
            <person name="Elmonairy A.A."/>
            <person name="Jayawant S."/>
            <person name="Murthy S."/>
            <person name="Walker I."/>
            <person name="Loong L."/>
            <person name="Bauer P."/>
            <person name="Vossier F."/>
            <person name="Denarier E."/>
            <person name="Maurice T."/>
            <person name="Barbier E.L."/>
            <person name="Deloulme J.C."/>
            <person name="Taylor J.C."/>
            <person name="Blair E.M."/>
            <person name="Andrieux A."/>
            <person name="Moutin M.J."/>
        </authorList>
    </citation>
    <scope>VARIANT NEDAHM 28-GLN--GLU-66 DEL</scope>
</reference>
<feature type="chain" id="PRO_0000233663" description="Small vasohibin-binding protein">
    <location>
        <begin position="1"/>
        <end position="66"/>
    </location>
</feature>
<feature type="region of interest" description="Disordered" evidence="3">
    <location>
        <begin position="1"/>
        <end position="31"/>
    </location>
</feature>
<feature type="coiled-coil region" evidence="2">
    <location>
        <begin position="5"/>
        <end position="52"/>
    </location>
</feature>
<feature type="compositionally biased region" description="Basic and acidic residues" evidence="3">
    <location>
        <begin position="1"/>
        <end position="23"/>
    </location>
</feature>
<feature type="sequence variant" id="VAR_083027" description="In NEDAHM; probably not expressed at protein level; impaired VASH1 secretion and solubility." evidence="7 13">
    <location>
        <begin position="28"/>
        <end position="66"/>
    </location>
</feature>
<feature type="mutagenesis site" description="Decreased VASH1 tyrosine carboxypeptidase activity on alpha-tubulin." evidence="11">
    <original>K</original>
    <variation>E</variation>
    <location>
        <position position="32"/>
    </location>
</feature>
<feature type="mutagenesis site" description="No effect on VASH1 tyrosine carboxypeptidase activity on alpha-tubulin." evidence="11">
    <original>R</original>
    <variation>E</variation>
    <location>
        <position position="34"/>
    </location>
</feature>
<feature type="mutagenesis site" description="Strongly decreased interaction with VASH1. Decreased VASH1 tyrosine carboxypeptidase activity on alpha-tubulin. Strongly decreased interaction with VASH2. Decreased VASH2 tyrosine carboxypeptidase activity on alpha-tubulin." evidence="8 10">
    <original>QR</original>
    <variation>AA</variation>
    <location>
        <begin position="35"/>
        <end position="36"/>
    </location>
</feature>
<feature type="mutagenesis site" description="Decreased VASH1 tyrosine carboxypeptidase activity on alpha-tubulin." evidence="11">
    <original>Q</original>
    <variation>A</variation>
    <location>
        <position position="35"/>
    </location>
</feature>
<feature type="mutagenesis site" description="Decreased VASH1 tyrosine carboxypeptidase activity on alpha-tubulin." evidence="11">
    <original>R</original>
    <variation>E</variation>
    <location>
        <position position="36"/>
    </location>
</feature>
<feature type="mutagenesis site" description="Strongly decreased VASH1 tyrosine carboxypeptidase activity on alpha-tubulin." evidence="9">
    <original>IYAL</original>
    <variation>EALE</variation>
    <location>
        <begin position="39"/>
        <end position="42"/>
    </location>
</feature>
<feature type="mutagenesis site" description="Strongly decreased interaction with VASH1. Decreased VASH1 tyrosine carboxypeptidase activity on alpha-tubulin. Disrupted interaction with VASH2. Decreased VASH2 tyrosine carboxypeptidase activity on alpha-tubulin." evidence="8 10">
    <original>IY</original>
    <variation>AA</variation>
    <location>
        <begin position="39"/>
        <end position="40"/>
    </location>
</feature>
<feature type="mutagenesis site" description="No effect on VASH1 tyrosine carboxypeptidase activity on alpha-tubulin." evidence="9">
    <original>I</original>
    <variation>E</variation>
    <location>
        <position position="39"/>
    </location>
</feature>
<feature type="mutagenesis site" description="No effect on VASH1 tyrosine carboxypeptidase activity on alpha-tubulin." evidence="11">
    <original>Y</original>
    <variation>F</variation>
    <location>
        <position position="40"/>
    </location>
</feature>
<feature type="mutagenesis site" description="Decreased interaction with VASH1. Almost abolished VASH1 tyrosine carboxypeptidase activity on alpha-tubulin. Strongly decreased interaction with VASH2. Decreased VASH2 tyrosine carboxypeptidase activity on alpha-tubulin." evidence="8 10">
    <original>LN</original>
    <variation>AA</variation>
    <location>
        <begin position="42"/>
        <end position="43"/>
    </location>
</feature>
<feature type="mutagenesis site" description="No effect on VASH1 tyrosine carboxypeptidase activity on alpha-tubulin." evidence="9">
    <original>L</original>
    <variation>E</variation>
    <location>
        <position position="42"/>
    </location>
</feature>
<feature type="mutagenesis site" description="Decreased VASH1 tyrosine carboxypeptidase activity on alpha-tubulin." evidence="11">
    <original>N</original>
    <variation>A</variation>
    <location>
        <position position="43"/>
    </location>
</feature>
<feature type="mutagenesis site" description="Slightly decreased interaction with VASH1. Decreased VASH1 tyrosine carboxypeptidase activity on alpha-tubulin. No effect on interaction with VASH2. No effect on VASH2 tyrosine carboxypeptidase activity on alpha-tubulin." evidence="8 10">
    <original>VM</original>
    <variation>AA</variation>
    <location>
        <begin position="45"/>
        <end position="46"/>
    </location>
</feature>
<feature type="mutagenesis site" description="Decreased VASH1 tyrosine carboxypeptidase activity on alpha-tubulin." evidence="11">
    <original>T</original>
    <variation>D</variation>
    <location>
        <position position="47"/>
    </location>
</feature>
<feature type="mutagenesis site" description="No effect on interaction with VASH2. No effect on VASH2 tyrosine carboxypeptidase activity on alpha-tubulin." evidence="10">
    <original>EQQQF</original>
    <variation>AQQQA</variation>
    <location>
        <begin position="50"/>
        <end position="54"/>
    </location>
</feature>
<feature type="helix" evidence="30">
    <location>
        <begin position="19"/>
        <end position="23"/>
    </location>
</feature>
<feature type="helix" evidence="30">
    <location>
        <begin position="27"/>
        <end position="59"/>
    </location>
</feature>
<evidence type="ECO:0000250" key="1">
    <source>
        <dbReference type="UniProtKB" id="Q99LQ4"/>
    </source>
</evidence>
<evidence type="ECO:0000255" key="2"/>
<evidence type="ECO:0000256" key="3">
    <source>
        <dbReference type="SAM" id="MobiDB-lite"/>
    </source>
</evidence>
<evidence type="ECO:0000269" key="4">
    <source>
    </source>
</evidence>
<evidence type="ECO:0000269" key="5">
    <source>
    </source>
</evidence>
<evidence type="ECO:0000269" key="6">
    <source>
    </source>
</evidence>
<evidence type="ECO:0000269" key="7">
    <source>
    </source>
</evidence>
<evidence type="ECO:0000269" key="8">
    <source>
    </source>
</evidence>
<evidence type="ECO:0000269" key="9">
    <source>
    </source>
</evidence>
<evidence type="ECO:0000269" key="10">
    <source>
    </source>
</evidence>
<evidence type="ECO:0000269" key="11">
    <source>
    </source>
</evidence>
<evidence type="ECO:0000269" key="12">
    <source>
    </source>
</evidence>
<evidence type="ECO:0000269" key="13">
    <source>
    </source>
</evidence>
<evidence type="ECO:0000303" key="14">
    <source>
    </source>
</evidence>
<evidence type="ECO:0000305" key="15"/>
<evidence type="ECO:0000312" key="16">
    <source>
        <dbReference type="HGNC" id="HGNC:29204"/>
    </source>
</evidence>
<evidence type="ECO:0007744" key="17">
    <source>
        <dbReference type="PDB" id="6J7B"/>
    </source>
</evidence>
<evidence type="ECO:0007744" key="18">
    <source>
        <dbReference type="PDB" id="6J8F"/>
    </source>
</evidence>
<evidence type="ECO:0007744" key="19">
    <source>
        <dbReference type="PDB" id="6J8N"/>
    </source>
</evidence>
<evidence type="ECO:0007744" key="20">
    <source>
        <dbReference type="PDB" id="6J91"/>
    </source>
</evidence>
<evidence type="ECO:0007744" key="21">
    <source>
        <dbReference type="PDB" id="6J9H"/>
    </source>
</evidence>
<evidence type="ECO:0007744" key="22">
    <source>
        <dbReference type="PDB" id="6JZC"/>
    </source>
</evidence>
<evidence type="ECO:0007744" key="23">
    <source>
        <dbReference type="PDB" id="6JZD"/>
    </source>
</evidence>
<evidence type="ECO:0007744" key="24">
    <source>
        <dbReference type="PDB" id="6JZE"/>
    </source>
</evidence>
<evidence type="ECO:0007744" key="25">
    <source>
        <dbReference type="PDB" id="6NVQ"/>
    </source>
</evidence>
<evidence type="ECO:0007744" key="26">
    <source>
        <dbReference type="PDB" id="6OCF"/>
    </source>
</evidence>
<evidence type="ECO:0007744" key="27">
    <source>
        <dbReference type="PDB" id="6OCG"/>
    </source>
</evidence>
<evidence type="ECO:0007744" key="28">
    <source>
        <dbReference type="PDB" id="6OCH"/>
    </source>
</evidence>
<evidence type="ECO:0007744" key="29">
    <source>
        <dbReference type="PDB" id="6QBY"/>
    </source>
</evidence>
<evidence type="ECO:0007829" key="30">
    <source>
        <dbReference type="PDB" id="6J4P"/>
    </source>
</evidence>
<accession>Q8N300</accession>
<accession>A8K5P1</accession>
<accession>D3DPW7</accession>